<comment type="function">
    <text evidence="1">Catalyzes the NADPH-dependent reduction of glutamyl-tRNA(Glu) to glutamate 1-semialdehyde (GSA).</text>
</comment>
<comment type="catalytic activity">
    <reaction evidence="1">
        <text>(S)-4-amino-5-oxopentanoate + tRNA(Glu) + NADP(+) = L-glutamyl-tRNA(Glu) + NADPH + H(+)</text>
        <dbReference type="Rhea" id="RHEA:12344"/>
        <dbReference type="Rhea" id="RHEA-COMP:9663"/>
        <dbReference type="Rhea" id="RHEA-COMP:9680"/>
        <dbReference type="ChEBI" id="CHEBI:15378"/>
        <dbReference type="ChEBI" id="CHEBI:57501"/>
        <dbReference type="ChEBI" id="CHEBI:57783"/>
        <dbReference type="ChEBI" id="CHEBI:58349"/>
        <dbReference type="ChEBI" id="CHEBI:78442"/>
        <dbReference type="ChEBI" id="CHEBI:78520"/>
        <dbReference type="EC" id="1.2.1.70"/>
    </reaction>
</comment>
<comment type="pathway">
    <text evidence="1">Porphyrin-containing compound metabolism; protoporphyrin-IX biosynthesis; 5-aminolevulinate from L-glutamyl-tRNA(Glu): step 1/2.</text>
</comment>
<comment type="subunit">
    <text evidence="1">Homodimer.</text>
</comment>
<comment type="domain">
    <text evidence="1">Possesses an unusual extended V-shaped dimeric structure with each monomer consisting of three distinct domains arranged along a curved 'spinal' alpha-helix. The N-terminal catalytic domain specifically recognizes the glutamate moiety of the substrate. The second domain is the NADPH-binding domain, and the third C-terminal domain is responsible for dimerization.</text>
</comment>
<comment type="miscellaneous">
    <text evidence="1">During catalysis, the active site Cys acts as a nucleophile attacking the alpha-carbonyl group of tRNA-bound glutamate with the formation of a thioester intermediate between enzyme and glutamate, and the concomitant release of tRNA(Glu). The thioester intermediate is finally reduced by direct hydride transfer from NADPH, to form the product GSA.</text>
</comment>
<comment type="similarity">
    <text evidence="1">Belongs to the glutamyl-tRNA reductase family.</text>
</comment>
<feature type="chain" id="PRO_1000093118" description="Glutamyl-tRNA reductase">
    <location>
        <begin position="1"/>
        <end position="432"/>
    </location>
</feature>
<feature type="active site" description="Nucleophile" evidence="1">
    <location>
        <position position="56"/>
    </location>
</feature>
<feature type="binding site" evidence="1">
    <location>
        <begin position="55"/>
        <end position="58"/>
    </location>
    <ligand>
        <name>substrate</name>
    </ligand>
</feature>
<feature type="binding site" evidence="1">
    <location>
        <position position="114"/>
    </location>
    <ligand>
        <name>substrate</name>
    </ligand>
</feature>
<feature type="binding site" evidence="1">
    <location>
        <begin position="119"/>
        <end position="121"/>
    </location>
    <ligand>
        <name>substrate</name>
    </ligand>
</feature>
<feature type="binding site" evidence="1">
    <location>
        <position position="125"/>
    </location>
    <ligand>
        <name>substrate</name>
    </ligand>
</feature>
<feature type="binding site" evidence="1">
    <location>
        <begin position="194"/>
        <end position="199"/>
    </location>
    <ligand>
        <name>NADP(+)</name>
        <dbReference type="ChEBI" id="CHEBI:58349"/>
    </ligand>
</feature>
<feature type="site" description="Important for activity" evidence="1">
    <location>
        <position position="104"/>
    </location>
</feature>
<keyword id="KW-0521">NADP</keyword>
<keyword id="KW-0560">Oxidoreductase</keyword>
<keyword id="KW-0627">Porphyrin biosynthesis</keyword>
<keyword id="KW-1185">Reference proteome</keyword>
<reference key="1">
    <citation type="submission" date="2007-10" db="EMBL/GenBank/DDBJ databases">
        <title>Complete sequence of chromosome 1 of Burkholderia multivorans ATCC 17616.</title>
        <authorList>
            <person name="Copeland A."/>
            <person name="Lucas S."/>
            <person name="Lapidus A."/>
            <person name="Barry K."/>
            <person name="Glavina del Rio T."/>
            <person name="Dalin E."/>
            <person name="Tice H."/>
            <person name="Pitluck S."/>
            <person name="Chain P."/>
            <person name="Malfatti S."/>
            <person name="Shin M."/>
            <person name="Vergez L."/>
            <person name="Schmutz J."/>
            <person name="Larimer F."/>
            <person name="Land M."/>
            <person name="Hauser L."/>
            <person name="Kyrpides N."/>
            <person name="Kim E."/>
            <person name="Tiedje J."/>
            <person name="Richardson P."/>
        </authorList>
    </citation>
    <scope>NUCLEOTIDE SEQUENCE [LARGE SCALE GENOMIC DNA]</scope>
    <source>
        <strain>ATCC 17616 / 249</strain>
    </source>
</reference>
<reference key="2">
    <citation type="submission" date="2007-04" db="EMBL/GenBank/DDBJ databases">
        <title>Complete genome sequence of Burkholderia multivorans ATCC 17616.</title>
        <authorList>
            <person name="Ohtsubo Y."/>
            <person name="Yamashita A."/>
            <person name="Kurokawa K."/>
            <person name="Takami H."/>
            <person name="Yuhara S."/>
            <person name="Nishiyama E."/>
            <person name="Endo R."/>
            <person name="Miyazaki R."/>
            <person name="Ono A."/>
            <person name="Yano K."/>
            <person name="Ito M."/>
            <person name="Sota M."/>
            <person name="Yuji N."/>
            <person name="Hattori M."/>
            <person name="Tsuda M."/>
        </authorList>
    </citation>
    <scope>NUCLEOTIDE SEQUENCE [LARGE SCALE GENOMIC DNA]</scope>
    <source>
        <strain>ATCC 17616 / 249</strain>
    </source>
</reference>
<accession>A9AJ67</accession>
<evidence type="ECO:0000255" key="1">
    <source>
        <dbReference type="HAMAP-Rule" id="MF_00087"/>
    </source>
</evidence>
<organism>
    <name type="scientific">Burkholderia multivorans (strain ATCC 17616 / 249)</name>
    <dbReference type="NCBI Taxonomy" id="395019"/>
    <lineage>
        <taxon>Bacteria</taxon>
        <taxon>Pseudomonadati</taxon>
        <taxon>Pseudomonadota</taxon>
        <taxon>Betaproteobacteria</taxon>
        <taxon>Burkholderiales</taxon>
        <taxon>Burkholderiaceae</taxon>
        <taxon>Burkholderia</taxon>
        <taxon>Burkholderia cepacia complex</taxon>
    </lineage>
</organism>
<gene>
    <name evidence="1" type="primary">hemA</name>
    <name type="ordered locus">Bmul_2887</name>
    <name type="ordered locus">BMULJ_00348</name>
</gene>
<proteinExistence type="inferred from homology"/>
<name>HEM1_BURM1</name>
<sequence length="432" mass="47498">MQLLTIGINHHTAPVALRERVAFPLEQIKPALVTFKNVFLGPQAPNAPEAAILSTCNRTELYCATDDRAARDAAIRWLSDYHRIPVDELAPHVYALPQSEAVRHAFRVASGLDSMVLGETQILGQMKDAVRTASEAGALGTYLNQLFQRTFAVAKEVRGTTEIGAQSVSMAAAAVRLAQRIFEKVSDQRVLFIGAGEMIELCATHFAAQGPRELVVANRTAERGQRLAERFNGRAMPLSDLPARMQEFDIIVSCTASTLPIIGLGAVERAVKARRHRPIFMVDLAVPRDIEPEVSKLKDVFLYTVDDLGAIVREGNASRQAAVAQAEAIIETRVQNFMQWLDTRSVVPVIRHMHTQADALRRLEVEKAQKMLARGDDPAAVLEALSQALTNKLIHGPTSALNRVNGADRDSLIELMRGFYQHAPRSNDQSGH</sequence>
<dbReference type="EC" id="1.2.1.70" evidence="1"/>
<dbReference type="EMBL" id="CP000868">
    <property type="protein sequence ID" value="ABX16571.1"/>
    <property type="molecule type" value="Genomic_DNA"/>
</dbReference>
<dbReference type="EMBL" id="AP009385">
    <property type="protein sequence ID" value="BAG42321.1"/>
    <property type="molecule type" value="Genomic_DNA"/>
</dbReference>
<dbReference type="RefSeq" id="WP_012214219.1">
    <property type="nucleotide sequence ID" value="NC_010084.1"/>
</dbReference>
<dbReference type="SMR" id="A9AJ67"/>
<dbReference type="STRING" id="395019.BMULJ_00348"/>
<dbReference type="KEGG" id="bmj:BMULJ_00348"/>
<dbReference type="KEGG" id="bmu:Bmul_2887"/>
<dbReference type="eggNOG" id="COG0373">
    <property type="taxonomic scope" value="Bacteria"/>
</dbReference>
<dbReference type="HOGENOM" id="CLU_035113_2_2_4"/>
<dbReference type="UniPathway" id="UPA00251">
    <property type="reaction ID" value="UER00316"/>
</dbReference>
<dbReference type="Proteomes" id="UP000008815">
    <property type="component" value="Chromosome 1"/>
</dbReference>
<dbReference type="GO" id="GO:0008883">
    <property type="term" value="F:glutamyl-tRNA reductase activity"/>
    <property type="evidence" value="ECO:0007669"/>
    <property type="project" value="UniProtKB-UniRule"/>
</dbReference>
<dbReference type="GO" id="GO:0050661">
    <property type="term" value="F:NADP binding"/>
    <property type="evidence" value="ECO:0007669"/>
    <property type="project" value="InterPro"/>
</dbReference>
<dbReference type="GO" id="GO:0019353">
    <property type="term" value="P:protoporphyrinogen IX biosynthetic process from glutamate"/>
    <property type="evidence" value="ECO:0007669"/>
    <property type="project" value="TreeGrafter"/>
</dbReference>
<dbReference type="CDD" id="cd05213">
    <property type="entry name" value="NAD_bind_Glutamyl_tRNA_reduct"/>
    <property type="match status" value="1"/>
</dbReference>
<dbReference type="FunFam" id="3.30.460.30:FF:000001">
    <property type="entry name" value="Glutamyl-tRNA reductase"/>
    <property type="match status" value="1"/>
</dbReference>
<dbReference type="FunFam" id="3.40.50.720:FF:000031">
    <property type="entry name" value="Glutamyl-tRNA reductase"/>
    <property type="match status" value="1"/>
</dbReference>
<dbReference type="Gene3D" id="3.30.460.30">
    <property type="entry name" value="Glutamyl-tRNA reductase, N-terminal domain"/>
    <property type="match status" value="1"/>
</dbReference>
<dbReference type="Gene3D" id="3.40.50.720">
    <property type="entry name" value="NAD(P)-binding Rossmann-like Domain"/>
    <property type="match status" value="1"/>
</dbReference>
<dbReference type="HAMAP" id="MF_00087">
    <property type="entry name" value="Glu_tRNA_reductase"/>
    <property type="match status" value="1"/>
</dbReference>
<dbReference type="InterPro" id="IPR000343">
    <property type="entry name" value="4pyrrol_synth_GluRdtase"/>
</dbReference>
<dbReference type="InterPro" id="IPR015896">
    <property type="entry name" value="4pyrrol_synth_GluRdtase_dimer"/>
</dbReference>
<dbReference type="InterPro" id="IPR015895">
    <property type="entry name" value="4pyrrol_synth_GluRdtase_N"/>
</dbReference>
<dbReference type="InterPro" id="IPR018214">
    <property type="entry name" value="GluRdtase_CS"/>
</dbReference>
<dbReference type="InterPro" id="IPR036453">
    <property type="entry name" value="GluRdtase_dimer_dom_sf"/>
</dbReference>
<dbReference type="InterPro" id="IPR036343">
    <property type="entry name" value="GluRdtase_N_sf"/>
</dbReference>
<dbReference type="InterPro" id="IPR036291">
    <property type="entry name" value="NAD(P)-bd_dom_sf"/>
</dbReference>
<dbReference type="InterPro" id="IPR006151">
    <property type="entry name" value="Shikm_DH/Glu-tRNA_Rdtase"/>
</dbReference>
<dbReference type="NCBIfam" id="TIGR01035">
    <property type="entry name" value="hemA"/>
    <property type="match status" value="1"/>
</dbReference>
<dbReference type="PANTHER" id="PTHR43013">
    <property type="entry name" value="GLUTAMYL-TRNA REDUCTASE"/>
    <property type="match status" value="1"/>
</dbReference>
<dbReference type="PANTHER" id="PTHR43013:SF1">
    <property type="entry name" value="GLUTAMYL-TRNA REDUCTASE"/>
    <property type="match status" value="1"/>
</dbReference>
<dbReference type="Pfam" id="PF00745">
    <property type="entry name" value="GlutR_dimer"/>
    <property type="match status" value="1"/>
</dbReference>
<dbReference type="Pfam" id="PF05201">
    <property type="entry name" value="GlutR_N"/>
    <property type="match status" value="1"/>
</dbReference>
<dbReference type="Pfam" id="PF01488">
    <property type="entry name" value="Shikimate_DH"/>
    <property type="match status" value="1"/>
</dbReference>
<dbReference type="PIRSF" id="PIRSF000445">
    <property type="entry name" value="4pyrrol_synth_GluRdtase"/>
    <property type="match status" value="1"/>
</dbReference>
<dbReference type="SUPFAM" id="SSF69742">
    <property type="entry name" value="Glutamyl tRNA-reductase catalytic, N-terminal domain"/>
    <property type="match status" value="1"/>
</dbReference>
<dbReference type="SUPFAM" id="SSF69075">
    <property type="entry name" value="Glutamyl tRNA-reductase dimerization domain"/>
    <property type="match status" value="1"/>
</dbReference>
<dbReference type="SUPFAM" id="SSF51735">
    <property type="entry name" value="NAD(P)-binding Rossmann-fold domains"/>
    <property type="match status" value="1"/>
</dbReference>
<dbReference type="PROSITE" id="PS00747">
    <property type="entry name" value="GLUTR"/>
    <property type="match status" value="1"/>
</dbReference>
<protein>
    <recommendedName>
        <fullName evidence="1">Glutamyl-tRNA reductase</fullName>
        <shortName evidence="1">GluTR</shortName>
        <ecNumber evidence="1">1.2.1.70</ecNumber>
    </recommendedName>
</protein>